<name>ATPA1_BURPS</name>
<feature type="chain" id="PRO_0000238219" description="ATP synthase subunit alpha 1">
    <location>
        <begin position="1"/>
        <end position="513"/>
    </location>
</feature>
<feature type="binding site" evidence="1">
    <location>
        <begin position="169"/>
        <end position="176"/>
    </location>
    <ligand>
        <name>ATP</name>
        <dbReference type="ChEBI" id="CHEBI:30616"/>
    </ligand>
</feature>
<feature type="site" description="Required for activity" evidence="1">
    <location>
        <position position="373"/>
    </location>
</feature>
<keyword id="KW-0066">ATP synthesis</keyword>
<keyword id="KW-0067">ATP-binding</keyword>
<keyword id="KW-0997">Cell inner membrane</keyword>
<keyword id="KW-1003">Cell membrane</keyword>
<keyword id="KW-0139">CF(1)</keyword>
<keyword id="KW-0375">Hydrogen ion transport</keyword>
<keyword id="KW-0406">Ion transport</keyword>
<keyword id="KW-0472">Membrane</keyword>
<keyword id="KW-0547">Nucleotide-binding</keyword>
<keyword id="KW-1185">Reference proteome</keyword>
<keyword id="KW-1278">Translocase</keyword>
<keyword id="KW-0813">Transport</keyword>
<organism>
    <name type="scientific">Burkholderia pseudomallei (strain K96243)</name>
    <dbReference type="NCBI Taxonomy" id="272560"/>
    <lineage>
        <taxon>Bacteria</taxon>
        <taxon>Pseudomonadati</taxon>
        <taxon>Pseudomonadota</taxon>
        <taxon>Betaproteobacteria</taxon>
        <taxon>Burkholderiales</taxon>
        <taxon>Burkholderiaceae</taxon>
        <taxon>Burkholderia</taxon>
        <taxon>pseudomallei group</taxon>
    </lineage>
</organism>
<dbReference type="EC" id="7.1.2.2" evidence="1"/>
<dbReference type="EMBL" id="BX571965">
    <property type="protein sequence ID" value="CAH37410.1"/>
    <property type="molecule type" value="Genomic_DNA"/>
</dbReference>
<dbReference type="RefSeq" id="YP_109991.1">
    <property type="nucleotide sequence ID" value="NC_006350.1"/>
</dbReference>
<dbReference type="SMR" id="Q63PH8"/>
<dbReference type="STRING" id="272560.BPSL3398"/>
<dbReference type="KEGG" id="bps:BPSL3398"/>
<dbReference type="PATRIC" id="fig|272560.51.peg.1792"/>
<dbReference type="eggNOG" id="COG0056">
    <property type="taxonomic scope" value="Bacteria"/>
</dbReference>
<dbReference type="Proteomes" id="UP000000605">
    <property type="component" value="Chromosome 1"/>
</dbReference>
<dbReference type="GO" id="GO:0005886">
    <property type="term" value="C:plasma membrane"/>
    <property type="evidence" value="ECO:0007669"/>
    <property type="project" value="UniProtKB-SubCell"/>
</dbReference>
<dbReference type="GO" id="GO:0045259">
    <property type="term" value="C:proton-transporting ATP synthase complex"/>
    <property type="evidence" value="ECO:0007669"/>
    <property type="project" value="UniProtKB-KW"/>
</dbReference>
<dbReference type="GO" id="GO:0043531">
    <property type="term" value="F:ADP binding"/>
    <property type="evidence" value="ECO:0007669"/>
    <property type="project" value="TreeGrafter"/>
</dbReference>
<dbReference type="GO" id="GO:0005524">
    <property type="term" value="F:ATP binding"/>
    <property type="evidence" value="ECO:0007669"/>
    <property type="project" value="UniProtKB-UniRule"/>
</dbReference>
<dbReference type="GO" id="GO:0046933">
    <property type="term" value="F:proton-transporting ATP synthase activity, rotational mechanism"/>
    <property type="evidence" value="ECO:0007669"/>
    <property type="project" value="UniProtKB-UniRule"/>
</dbReference>
<dbReference type="CDD" id="cd18113">
    <property type="entry name" value="ATP-synt_F1_alpha_C"/>
    <property type="match status" value="1"/>
</dbReference>
<dbReference type="CDD" id="cd18116">
    <property type="entry name" value="ATP-synt_F1_alpha_N"/>
    <property type="match status" value="1"/>
</dbReference>
<dbReference type="CDD" id="cd01132">
    <property type="entry name" value="F1-ATPase_alpha_CD"/>
    <property type="match status" value="1"/>
</dbReference>
<dbReference type="FunFam" id="1.20.150.20:FF:000001">
    <property type="entry name" value="ATP synthase subunit alpha"/>
    <property type="match status" value="1"/>
</dbReference>
<dbReference type="FunFam" id="2.40.30.20:FF:000001">
    <property type="entry name" value="ATP synthase subunit alpha"/>
    <property type="match status" value="1"/>
</dbReference>
<dbReference type="FunFam" id="3.40.50.300:FF:000002">
    <property type="entry name" value="ATP synthase subunit alpha"/>
    <property type="match status" value="1"/>
</dbReference>
<dbReference type="Gene3D" id="2.40.30.20">
    <property type="match status" value="1"/>
</dbReference>
<dbReference type="Gene3D" id="1.20.150.20">
    <property type="entry name" value="ATP synthase alpha/beta chain, C-terminal domain"/>
    <property type="match status" value="1"/>
</dbReference>
<dbReference type="Gene3D" id="3.40.50.300">
    <property type="entry name" value="P-loop containing nucleotide triphosphate hydrolases"/>
    <property type="match status" value="1"/>
</dbReference>
<dbReference type="HAMAP" id="MF_01346">
    <property type="entry name" value="ATP_synth_alpha_bact"/>
    <property type="match status" value="1"/>
</dbReference>
<dbReference type="InterPro" id="IPR023366">
    <property type="entry name" value="ATP_synth_asu-like_sf"/>
</dbReference>
<dbReference type="InterPro" id="IPR000793">
    <property type="entry name" value="ATP_synth_asu_C"/>
</dbReference>
<dbReference type="InterPro" id="IPR038376">
    <property type="entry name" value="ATP_synth_asu_C_sf"/>
</dbReference>
<dbReference type="InterPro" id="IPR033732">
    <property type="entry name" value="ATP_synth_F1_a_nt-bd_dom"/>
</dbReference>
<dbReference type="InterPro" id="IPR005294">
    <property type="entry name" value="ATP_synth_F1_asu"/>
</dbReference>
<dbReference type="InterPro" id="IPR020003">
    <property type="entry name" value="ATPase_a/bsu_AS"/>
</dbReference>
<dbReference type="InterPro" id="IPR004100">
    <property type="entry name" value="ATPase_F1/V1/A1_a/bsu_N"/>
</dbReference>
<dbReference type="InterPro" id="IPR036121">
    <property type="entry name" value="ATPase_F1/V1/A1_a/bsu_N_sf"/>
</dbReference>
<dbReference type="InterPro" id="IPR000194">
    <property type="entry name" value="ATPase_F1/V1/A1_a/bsu_nucl-bd"/>
</dbReference>
<dbReference type="InterPro" id="IPR027417">
    <property type="entry name" value="P-loop_NTPase"/>
</dbReference>
<dbReference type="NCBIfam" id="TIGR00962">
    <property type="entry name" value="atpA"/>
    <property type="match status" value="1"/>
</dbReference>
<dbReference type="NCBIfam" id="NF009884">
    <property type="entry name" value="PRK13343.1"/>
    <property type="match status" value="1"/>
</dbReference>
<dbReference type="PANTHER" id="PTHR48082">
    <property type="entry name" value="ATP SYNTHASE SUBUNIT ALPHA, MITOCHONDRIAL"/>
    <property type="match status" value="1"/>
</dbReference>
<dbReference type="PANTHER" id="PTHR48082:SF2">
    <property type="entry name" value="ATP SYNTHASE SUBUNIT ALPHA, MITOCHONDRIAL"/>
    <property type="match status" value="1"/>
</dbReference>
<dbReference type="Pfam" id="PF00006">
    <property type="entry name" value="ATP-synt_ab"/>
    <property type="match status" value="1"/>
</dbReference>
<dbReference type="Pfam" id="PF00306">
    <property type="entry name" value="ATP-synt_ab_C"/>
    <property type="match status" value="1"/>
</dbReference>
<dbReference type="Pfam" id="PF02874">
    <property type="entry name" value="ATP-synt_ab_N"/>
    <property type="match status" value="1"/>
</dbReference>
<dbReference type="PIRSF" id="PIRSF039088">
    <property type="entry name" value="F_ATPase_subunit_alpha"/>
    <property type="match status" value="1"/>
</dbReference>
<dbReference type="SUPFAM" id="SSF47917">
    <property type="entry name" value="C-terminal domain of alpha and beta subunits of F1 ATP synthase"/>
    <property type="match status" value="1"/>
</dbReference>
<dbReference type="SUPFAM" id="SSF50615">
    <property type="entry name" value="N-terminal domain of alpha and beta subunits of F1 ATP synthase"/>
    <property type="match status" value="1"/>
</dbReference>
<dbReference type="SUPFAM" id="SSF52540">
    <property type="entry name" value="P-loop containing nucleoside triphosphate hydrolases"/>
    <property type="match status" value="1"/>
</dbReference>
<dbReference type="PROSITE" id="PS00152">
    <property type="entry name" value="ATPASE_ALPHA_BETA"/>
    <property type="match status" value="1"/>
</dbReference>
<comment type="function">
    <text evidence="1">Produces ATP from ADP in the presence of a proton gradient across the membrane. The alpha chain is a regulatory subunit.</text>
</comment>
<comment type="catalytic activity">
    <reaction evidence="1">
        <text>ATP + H2O + 4 H(+)(in) = ADP + phosphate + 5 H(+)(out)</text>
        <dbReference type="Rhea" id="RHEA:57720"/>
        <dbReference type="ChEBI" id="CHEBI:15377"/>
        <dbReference type="ChEBI" id="CHEBI:15378"/>
        <dbReference type="ChEBI" id="CHEBI:30616"/>
        <dbReference type="ChEBI" id="CHEBI:43474"/>
        <dbReference type="ChEBI" id="CHEBI:456216"/>
        <dbReference type="EC" id="7.1.2.2"/>
    </reaction>
</comment>
<comment type="subunit">
    <text evidence="1">F-type ATPases have 2 components, CF(1) - the catalytic core - and CF(0) - the membrane proton channel. CF(1) has five subunits: alpha(3), beta(3), gamma(1), delta(1), epsilon(1). CF(0) has three main subunits: a(1), b(2) and c(9-12). The alpha and beta chains form an alternating ring which encloses part of the gamma chain. CF(1) is attached to CF(0) by a central stalk formed by the gamma and epsilon chains, while a peripheral stalk is formed by the delta and b chains.</text>
</comment>
<comment type="subcellular location">
    <subcellularLocation>
        <location evidence="1">Cell inner membrane</location>
        <topology evidence="1">Peripheral membrane protein</topology>
    </subcellularLocation>
</comment>
<comment type="similarity">
    <text evidence="1">Belongs to the ATPase alpha/beta chains family.</text>
</comment>
<accession>Q63PH8</accession>
<reference key="1">
    <citation type="journal article" date="2004" name="Proc. Natl. Acad. Sci. U.S.A.">
        <title>Genomic plasticity of the causative agent of melioidosis, Burkholderia pseudomallei.</title>
        <authorList>
            <person name="Holden M.T.G."/>
            <person name="Titball R.W."/>
            <person name="Peacock S.J."/>
            <person name="Cerdeno-Tarraga A.-M."/>
            <person name="Atkins T."/>
            <person name="Crossman L.C."/>
            <person name="Pitt T."/>
            <person name="Churcher C."/>
            <person name="Mungall K.L."/>
            <person name="Bentley S.D."/>
            <person name="Sebaihia M."/>
            <person name="Thomson N.R."/>
            <person name="Bason N."/>
            <person name="Beacham I.R."/>
            <person name="Brooks K."/>
            <person name="Brown K.A."/>
            <person name="Brown N.F."/>
            <person name="Challis G.L."/>
            <person name="Cherevach I."/>
            <person name="Chillingworth T."/>
            <person name="Cronin A."/>
            <person name="Crossett B."/>
            <person name="Davis P."/>
            <person name="DeShazer D."/>
            <person name="Feltwell T."/>
            <person name="Fraser A."/>
            <person name="Hance Z."/>
            <person name="Hauser H."/>
            <person name="Holroyd S."/>
            <person name="Jagels K."/>
            <person name="Keith K.E."/>
            <person name="Maddison M."/>
            <person name="Moule S."/>
            <person name="Price C."/>
            <person name="Quail M.A."/>
            <person name="Rabbinowitsch E."/>
            <person name="Rutherford K."/>
            <person name="Sanders M."/>
            <person name="Simmonds M."/>
            <person name="Songsivilai S."/>
            <person name="Stevens K."/>
            <person name="Tumapa S."/>
            <person name="Vesaratchavest M."/>
            <person name="Whitehead S."/>
            <person name="Yeats C."/>
            <person name="Barrell B.G."/>
            <person name="Oyston P.C.F."/>
            <person name="Parkhill J."/>
        </authorList>
    </citation>
    <scope>NUCLEOTIDE SEQUENCE [LARGE SCALE GENOMIC DNA]</scope>
    <source>
        <strain>K96243</strain>
    </source>
</reference>
<protein>
    <recommendedName>
        <fullName evidence="1">ATP synthase subunit alpha 1</fullName>
        <ecNumber evidence="1">7.1.2.2</ecNumber>
    </recommendedName>
    <alternativeName>
        <fullName evidence="1">ATP synthase F1 sector subunit alpha 1</fullName>
    </alternativeName>
    <alternativeName>
        <fullName evidence="1">F-ATPase subunit alpha 1</fullName>
    </alternativeName>
</protein>
<gene>
    <name evidence="1" type="primary">atpA1</name>
    <name type="ordered locus">BPSL3398</name>
</gene>
<proteinExistence type="inferred from homology"/>
<sequence>MQLNPSEISELIKSRIQGLEASADVRNQGTVISVTDGIVRIHGLSDVMQGEMLEFPGNTFGLALNLERDSVGAVILGEYEHISEGDIVKTTGRILEVPVGPELVGRVVDALGNPIDGKGPVNAKLTDAIEKIAPGVIWRKSVSQPVQTGLKSIDSMVPIGRGQRELIIGDRQCGKTAVAIDTIINQKGKDLICIYVAIGQKASSIMNVVRKLEETGALEYTIVVAASASESAAMQYLAPYAGCTMGEYFRDRGQDALIIYDDLTKQAWAYRQISLLLRRPPGREAYPGDVFYLHSRLLERAARVSEEYVEKFTNGEVKGKSGSLTALPVIETQAGDVTAFVPTNVISITDGQIFLETDLFNAGIRPAINAGVSVSRVGGAAQTKVVKKLSGGIRTDLAQYRELAAFAQFASDLDEATRKQLERGRRVTELLKQPQYQPLQVWELAVSLFSANNGYLDDLDVKDVLPFEKGLREYLKTSHADLIKRIEDTKDLSKDDESALHAALKDFKKSGAY</sequence>
<evidence type="ECO:0000255" key="1">
    <source>
        <dbReference type="HAMAP-Rule" id="MF_01346"/>
    </source>
</evidence>